<feature type="chain" id="PRO_0000103297" description="Methionine aminotransferase BCAT4">
    <location>
        <begin position="1"/>
        <end position="354"/>
    </location>
</feature>
<feature type="modified residue" description="N6-(pyridoxal phosphate)lysine" evidence="1">
    <location>
        <position position="198"/>
    </location>
</feature>
<dbReference type="EC" id="2.6.1.88"/>
<dbReference type="EMBL" id="AJ271732">
    <property type="protein sequence ID" value="CAB93129.1"/>
    <property type="molecule type" value="mRNA"/>
</dbReference>
<dbReference type="EMBL" id="AP000417">
    <property type="protein sequence ID" value="BAB02558.1"/>
    <property type="molecule type" value="Genomic_DNA"/>
</dbReference>
<dbReference type="EMBL" id="CP002686">
    <property type="protein sequence ID" value="AEE76278.1"/>
    <property type="molecule type" value="Genomic_DNA"/>
</dbReference>
<dbReference type="EMBL" id="AY052676">
    <property type="protein sequence ID" value="AAK96580.1"/>
    <property type="molecule type" value="mRNA"/>
</dbReference>
<dbReference type="EMBL" id="AF446892">
    <property type="protein sequence ID" value="AAL38625.1"/>
    <property type="molecule type" value="mRNA"/>
</dbReference>
<dbReference type="EMBL" id="AK226525">
    <property type="protein sequence ID" value="BAE98664.1"/>
    <property type="molecule type" value="mRNA"/>
</dbReference>
<dbReference type="PIR" id="T52401">
    <property type="entry name" value="T52401"/>
</dbReference>
<dbReference type="RefSeq" id="NP_188605.1">
    <property type="nucleotide sequence ID" value="NM_112861.4"/>
</dbReference>
<dbReference type="SMR" id="Q9LE06"/>
<dbReference type="BioGRID" id="6841">
    <property type="interactions" value="1"/>
</dbReference>
<dbReference type="FunCoup" id="Q9LE06">
    <property type="interactions" value="1364"/>
</dbReference>
<dbReference type="STRING" id="3702.Q9LE06"/>
<dbReference type="iPTMnet" id="Q9LE06"/>
<dbReference type="PaxDb" id="3702-AT3G19710.1"/>
<dbReference type="ProteomicsDB" id="241130"/>
<dbReference type="EnsemblPlants" id="AT3G19710.1">
    <property type="protein sequence ID" value="AT3G19710.1"/>
    <property type="gene ID" value="AT3G19710"/>
</dbReference>
<dbReference type="GeneID" id="821508"/>
<dbReference type="Gramene" id="AT3G19710.1">
    <property type="protein sequence ID" value="AT3G19710.1"/>
    <property type="gene ID" value="AT3G19710"/>
</dbReference>
<dbReference type="KEGG" id="ath:AT3G19710"/>
<dbReference type="Araport" id="AT3G19710"/>
<dbReference type="TAIR" id="AT3G19710">
    <property type="gene designation" value="BCAT4"/>
</dbReference>
<dbReference type="eggNOG" id="KOG0975">
    <property type="taxonomic scope" value="Eukaryota"/>
</dbReference>
<dbReference type="HOGENOM" id="CLU_031922_4_0_1"/>
<dbReference type="InParanoid" id="Q9LE06"/>
<dbReference type="OMA" id="MYVAKCN"/>
<dbReference type="PhylomeDB" id="Q9LE06"/>
<dbReference type="BioCyc" id="ARA:AT3G19710-MONOMER"/>
<dbReference type="BioCyc" id="MetaCyc:AT3G19710-MONOMER"/>
<dbReference type="BRENDA" id="2.6.1.42">
    <property type="organism ID" value="399"/>
</dbReference>
<dbReference type="BRENDA" id="2.6.1.88">
    <property type="organism ID" value="399"/>
</dbReference>
<dbReference type="SABIO-RK" id="Q9LE06"/>
<dbReference type="PRO" id="PR:Q9LE06"/>
<dbReference type="Proteomes" id="UP000006548">
    <property type="component" value="Chromosome 3"/>
</dbReference>
<dbReference type="ExpressionAtlas" id="Q9LE06">
    <property type="expression patterns" value="baseline and differential"/>
</dbReference>
<dbReference type="GO" id="GO:0005829">
    <property type="term" value="C:cytosol"/>
    <property type="evidence" value="ECO:0000314"/>
    <property type="project" value="TAIR"/>
</dbReference>
<dbReference type="GO" id="GO:0004084">
    <property type="term" value="F:branched-chain-amino-acid transaminase activity"/>
    <property type="evidence" value="ECO:0007669"/>
    <property type="project" value="InterPro"/>
</dbReference>
<dbReference type="GO" id="GO:0010326">
    <property type="term" value="F:methionine-oxo-acid transaminase activity"/>
    <property type="evidence" value="ECO:0000314"/>
    <property type="project" value="TAIR"/>
</dbReference>
<dbReference type="GO" id="GO:0009081">
    <property type="term" value="P:branched-chain amino acid metabolic process"/>
    <property type="evidence" value="ECO:0007669"/>
    <property type="project" value="InterPro"/>
</dbReference>
<dbReference type="GO" id="GO:0019761">
    <property type="term" value="P:glucosinolate biosynthetic process"/>
    <property type="evidence" value="ECO:0000315"/>
    <property type="project" value="TAIR"/>
</dbReference>
<dbReference type="GO" id="GO:0009416">
    <property type="term" value="P:response to light stimulus"/>
    <property type="evidence" value="ECO:0000270"/>
    <property type="project" value="UniProtKB"/>
</dbReference>
<dbReference type="GO" id="GO:0009611">
    <property type="term" value="P:response to wounding"/>
    <property type="evidence" value="ECO:0000270"/>
    <property type="project" value="UniProtKB"/>
</dbReference>
<dbReference type="CDD" id="cd01557">
    <property type="entry name" value="BCAT_beta_family"/>
    <property type="match status" value="1"/>
</dbReference>
<dbReference type="FunFam" id="3.20.10.10:FF:000047">
    <property type="entry name" value="Methionine aminotransferase BCAT4"/>
    <property type="match status" value="1"/>
</dbReference>
<dbReference type="Gene3D" id="3.30.470.10">
    <property type="match status" value="1"/>
</dbReference>
<dbReference type="Gene3D" id="3.20.10.10">
    <property type="entry name" value="D-amino Acid Aminotransferase, subunit A, domain 2"/>
    <property type="match status" value="1"/>
</dbReference>
<dbReference type="InterPro" id="IPR001544">
    <property type="entry name" value="Aminotrans_IV"/>
</dbReference>
<dbReference type="InterPro" id="IPR036038">
    <property type="entry name" value="Aminotransferase-like"/>
</dbReference>
<dbReference type="InterPro" id="IPR005786">
    <property type="entry name" value="B_amino_transII"/>
</dbReference>
<dbReference type="InterPro" id="IPR043132">
    <property type="entry name" value="BCAT-like_C"/>
</dbReference>
<dbReference type="InterPro" id="IPR043131">
    <property type="entry name" value="BCAT-like_N"/>
</dbReference>
<dbReference type="InterPro" id="IPR033939">
    <property type="entry name" value="BCAT_family"/>
</dbReference>
<dbReference type="NCBIfam" id="TIGR01123">
    <property type="entry name" value="ilvE_II"/>
    <property type="match status" value="1"/>
</dbReference>
<dbReference type="NCBIfam" id="NF009897">
    <property type="entry name" value="PRK13357.1"/>
    <property type="match status" value="1"/>
</dbReference>
<dbReference type="PANTHER" id="PTHR42825">
    <property type="entry name" value="AMINO ACID AMINOTRANSFERASE"/>
    <property type="match status" value="1"/>
</dbReference>
<dbReference type="PANTHER" id="PTHR42825:SF8">
    <property type="entry name" value="METHIONINE AMINOTRANSFERASE BCAT4"/>
    <property type="match status" value="1"/>
</dbReference>
<dbReference type="Pfam" id="PF01063">
    <property type="entry name" value="Aminotran_4"/>
    <property type="match status" value="1"/>
</dbReference>
<dbReference type="PIRSF" id="PIRSF006468">
    <property type="entry name" value="BCAT1"/>
    <property type="match status" value="1"/>
</dbReference>
<dbReference type="SUPFAM" id="SSF56752">
    <property type="entry name" value="D-aminoacid aminotransferase-like PLP-dependent enzymes"/>
    <property type="match status" value="1"/>
</dbReference>
<gene>
    <name type="primary">BCAT4</name>
    <name type="ordered locus">At3g19710</name>
    <name type="ORF">MMB12_16</name>
</gene>
<evidence type="ECO:0000250" key="1"/>
<evidence type="ECO:0000269" key="2">
    <source>
    </source>
</evidence>
<evidence type="ECO:0000269" key="3">
    <source>
    </source>
</evidence>
<evidence type="ECO:0000269" key="4">
    <source>
    </source>
</evidence>
<evidence type="ECO:0000305" key="5"/>
<organism>
    <name type="scientific">Arabidopsis thaliana</name>
    <name type="common">Mouse-ear cress</name>
    <dbReference type="NCBI Taxonomy" id="3702"/>
    <lineage>
        <taxon>Eukaryota</taxon>
        <taxon>Viridiplantae</taxon>
        <taxon>Streptophyta</taxon>
        <taxon>Embryophyta</taxon>
        <taxon>Tracheophyta</taxon>
        <taxon>Spermatophyta</taxon>
        <taxon>Magnoliopsida</taxon>
        <taxon>eudicotyledons</taxon>
        <taxon>Gunneridae</taxon>
        <taxon>Pentapetalae</taxon>
        <taxon>rosids</taxon>
        <taxon>malvids</taxon>
        <taxon>Brassicales</taxon>
        <taxon>Brassicaceae</taxon>
        <taxon>Camelineae</taxon>
        <taxon>Arabidopsis</taxon>
    </lineage>
</organism>
<comment type="function">
    <text evidence="3 4">Converts 2-oxo acids to branched-chain amino acids. Shows activity with L-Leu, L-Ile and L-Val as amino donors and alpha-keto-glutarate as an amino acceptor, but no activity for D-isomers of Leu, Ile, Val, Asp, Glu or Ala. Acts on methionine and its derivatives and the corresponding 2-oxo acids. Catalyzes the initial deamination of methionine to 4-methylthio-2-oxobutyrate as well as the transamination of other typical intermediates of the methionine chain elongation pathway.</text>
</comment>
<comment type="catalytic activity">
    <reaction evidence="3 4">
        <text>a 2-oxocarboxylate + L-methionine = 4-methylsulfanyl-2-oxobutanoate + an L-alpha-amino acid</text>
        <dbReference type="Rhea" id="RHEA:31763"/>
        <dbReference type="ChEBI" id="CHEBI:16723"/>
        <dbReference type="ChEBI" id="CHEBI:35179"/>
        <dbReference type="ChEBI" id="CHEBI:57844"/>
        <dbReference type="ChEBI" id="CHEBI:59869"/>
        <dbReference type="EC" id="2.6.1.88"/>
    </reaction>
</comment>
<comment type="cofactor">
    <cofactor evidence="5">
        <name>pyridoxal 5'-phosphate</name>
        <dbReference type="ChEBI" id="CHEBI:597326"/>
    </cofactor>
</comment>
<comment type="biophysicochemical properties">
    <kinetics>
        <KM evidence="3">0.045 mM for 2-oxo acid 4-methylthio-2-oxobutyrate (MTOB)</KM>
        <KM evidence="3">0.93 mM for methionine</KM>
        <KM evidence="3">4.86 mM for leucine</KM>
        <KM evidence="4">1.61 mM for L-leucine</KM>
        <Vmax evidence="3">2.7 umol/min/mg enzyme with MTOB as substrate</Vmax>
        <Vmax evidence="3">0.089 umol/min/mg enzyme with methionine as substrate</Vmax>
        <Vmax evidence="3">0.11 umol/min/mg enzyme with leucine as substrate</Vmax>
    </kinetics>
</comment>
<comment type="subcellular location">
    <subcellularLocation>
        <location evidence="2 3">Cytoplasm</location>
    </subcellularLocation>
</comment>
<comment type="tissue specificity">
    <text evidence="3">Mostly expressed in phloem.</text>
</comment>
<comment type="induction">
    <text evidence="3">Transient induction by wounding. Follows a diurnal rhythm.</text>
</comment>
<comment type="disruption phenotype">
    <text evidence="3">Reduced methionine-derived aliphatic glucosinolate accumulation, but increased levels of free methionine and S-methylmethionine.</text>
</comment>
<comment type="miscellaneous">
    <text>Although all the other members of the family possess a branched-chain amino acid aminotransferase activity, the exact function of BCAT4 remains unclear at present.</text>
</comment>
<comment type="similarity">
    <text evidence="5">Belongs to the class-IV pyridoxal-phosphate-dependent aminotransferase family.</text>
</comment>
<name>BCAT4_ARATH</name>
<accession>Q9LE06</accession>
<accession>Q0WW34</accession>
<keyword id="KW-0032">Aminotransferase</keyword>
<keyword id="KW-0963">Cytoplasm</keyword>
<keyword id="KW-0663">Pyridoxal phosphate</keyword>
<keyword id="KW-1185">Reference proteome</keyword>
<keyword id="KW-0808">Transferase</keyword>
<protein>
    <recommendedName>
        <fullName>Methionine aminotransferase BCAT4</fullName>
        <ecNumber>2.6.1.88</ecNumber>
    </recommendedName>
    <alternativeName>
        <fullName>Branched-chain-amino-acid aminotransferase 4</fullName>
        <shortName>Atbcat-4</shortName>
    </alternativeName>
    <alternativeName>
        <fullName>Methionine-oxo-acid transaminase BCAT4</fullName>
    </alternativeName>
</protein>
<reference key="1">
    <citation type="journal article" date="2002" name="Plant Physiol.">
        <title>The branched-chain amino acid transaminase gene family in Arabidopsis encodes plastid and mitochondrial proteins.</title>
        <authorList>
            <person name="Diebold R."/>
            <person name="Schuster J."/>
            <person name="Daschner K."/>
            <person name="Binder S."/>
        </authorList>
    </citation>
    <scope>NUCLEOTIDE SEQUENCE [MRNA]</scope>
    <scope>SUBCELLULAR LOCATION</scope>
    <source>
        <strain>cv. Columbia</strain>
    </source>
</reference>
<reference key="2">
    <citation type="journal article" date="2000" name="DNA Res.">
        <title>Structural analysis of Arabidopsis thaliana chromosome 3. II. Sequence features of the 4,251,695 bp regions covered by 90 P1, TAC and BAC clones.</title>
        <authorList>
            <person name="Kaneko T."/>
            <person name="Katoh T."/>
            <person name="Sato S."/>
            <person name="Nakamura Y."/>
            <person name="Asamizu E."/>
            <person name="Tabata S."/>
        </authorList>
    </citation>
    <scope>NUCLEOTIDE SEQUENCE [LARGE SCALE GENOMIC DNA]</scope>
    <source>
        <strain>cv. Columbia</strain>
    </source>
</reference>
<reference key="3">
    <citation type="journal article" date="2017" name="Plant J.">
        <title>Araport11: a complete reannotation of the Arabidopsis thaliana reference genome.</title>
        <authorList>
            <person name="Cheng C.Y."/>
            <person name="Krishnakumar V."/>
            <person name="Chan A.P."/>
            <person name="Thibaud-Nissen F."/>
            <person name="Schobel S."/>
            <person name="Town C.D."/>
        </authorList>
    </citation>
    <scope>GENOME REANNOTATION</scope>
    <source>
        <strain>cv. Columbia</strain>
    </source>
</reference>
<reference key="4">
    <citation type="journal article" date="2003" name="Science">
        <title>Empirical analysis of transcriptional activity in the Arabidopsis genome.</title>
        <authorList>
            <person name="Yamada K."/>
            <person name="Lim J."/>
            <person name="Dale J.M."/>
            <person name="Chen H."/>
            <person name="Shinn P."/>
            <person name="Palm C.J."/>
            <person name="Southwick A.M."/>
            <person name="Wu H.C."/>
            <person name="Kim C.J."/>
            <person name="Nguyen M."/>
            <person name="Pham P.K."/>
            <person name="Cheuk R.F."/>
            <person name="Karlin-Newmann G."/>
            <person name="Liu S.X."/>
            <person name="Lam B."/>
            <person name="Sakano H."/>
            <person name="Wu T."/>
            <person name="Yu G."/>
            <person name="Miranda M."/>
            <person name="Quach H.L."/>
            <person name="Tripp M."/>
            <person name="Chang C.H."/>
            <person name="Lee J.M."/>
            <person name="Toriumi M.J."/>
            <person name="Chan M.M."/>
            <person name="Tang C.C."/>
            <person name="Onodera C.S."/>
            <person name="Deng J.M."/>
            <person name="Akiyama K."/>
            <person name="Ansari Y."/>
            <person name="Arakawa T."/>
            <person name="Banh J."/>
            <person name="Banno F."/>
            <person name="Bowser L."/>
            <person name="Brooks S.Y."/>
            <person name="Carninci P."/>
            <person name="Chao Q."/>
            <person name="Choy N."/>
            <person name="Enju A."/>
            <person name="Goldsmith A.D."/>
            <person name="Gurjal M."/>
            <person name="Hansen N.F."/>
            <person name="Hayashizaki Y."/>
            <person name="Johnson-Hopson C."/>
            <person name="Hsuan V.W."/>
            <person name="Iida K."/>
            <person name="Karnes M."/>
            <person name="Khan S."/>
            <person name="Koesema E."/>
            <person name="Ishida J."/>
            <person name="Jiang P.X."/>
            <person name="Jones T."/>
            <person name="Kawai J."/>
            <person name="Kamiya A."/>
            <person name="Meyers C."/>
            <person name="Nakajima M."/>
            <person name="Narusaka M."/>
            <person name="Seki M."/>
            <person name="Sakurai T."/>
            <person name="Satou M."/>
            <person name="Tamse R."/>
            <person name="Vaysberg M."/>
            <person name="Wallender E.K."/>
            <person name="Wong C."/>
            <person name="Yamamura Y."/>
            <person name="Yuan S."/>
            <person name="Shinozaki K."/>
            <person name="Davis R.W."/>
            <person name="Theologis A."/>
            <person name="Ecker J.R."/>
        </authorList>
    </citation>
    <scope>NUCLEOTIDE SEQUENCE [LARGE SCALE MRNA]</scope>
    <source>
        <strain>cv. Columbia</strain>
    </source>
</reference>
<reference key="5">
    <citation type="submission" date="2006-07" db="EMBL/GenBank/DDBJ databases">
        <title>Large-scale analysis of RIKEN Arabidopsis full-length (RAFL) cDNAs.</title>
        <authorList>
            <person name="Totoki Y."/>
            <person name="Seki M."/>
            <person name="Ishida J."/>
            <person name="Nakajima M."/>
            <person name="Enju A."/>
            <person name="Kamiya A."/>
            <person name="Narusaka M."/>
            <person name="Shin-i T."/>
            <person name="Nakagawa M."/>
            <person name="Sakamoto N."/>
            <person name="Oishi K."/>
            <person name="Kohara Y."/>
            <person name="Kobayashi M."/>
            <person name="Toyoda A."/>
            <person name="Sakaki Y."/>
            <person name="Sakurai T."/>
            <person name="Iida K."/>
            <person name="Akiyama K."/>
            <person name="Satou M."/>
            <person name="Toyoda T."/>
            <person name="Konagaya A."/>
            <person name="Carninci P."/>
            <person name="Kawai J."/>
            <person name="Hayashizaki Y."/>
            <person name="Shinozaki K."/>
        </authorList>
    </citation>
    <scope>NUCLEOTIDE SEQUENCE [LARGE SCALE MRNA]</scope>
    <source>
        <strain>cv. Columbia</strain>
    </source>
</reference>
<reference key="6">
    <citation type="journal article" date="2006" name="Plant Cell">
        <title>Branched-chain aminotransferase4 is part of the chain elongation pathway in the biosynthesis of methionine-derived glucosinolates in Arabidopsis.</title>
        <authorList>
            <person name="Schuster J."/>
            <person name="Knill T."/>
            <person name="Reichelt M."/>
            <person name="Gershenzon J."/>
            <person name="Binder S."/>
        </authorList>
    </citation>
    <scope>FUNCTION</scope>
    <scope>DISRUPTION PHENOTYPE</scope>
    <scope>CATALYTIC ACTIVITY</scope>
    <scope>INDUCTION BY WOUNDING</scope>
    <scope>TISSUE SPECIFICITY</scope>
    <scope>SUBCELLULAR LOCATION</scope>
    <scope>BIOPHYSICOCHEMICAL PROPERTIES</scope>
</reference>
<reference key="7">
    <citation type="journal article" date="2008" name="FEBS J.">
        <title>Cloning and functional characterization of Arabidopsis thaliana D-amino acid aminotransferase--D-aspartate behavior during germination.</title>
        <authorList>
            <person name="Funakoshi M."/>
            <person name="Sekine M."/>
            <person name="Katane M."/>
            <person name="Furuchi T."/>
            <person name="Yohda M."/>
            <person name="Yoshikawa T."/>
            <person name="Homma H."/>
        </authorList>
    </citation>
    <scope>FUNCTION</scope>
    <scope>CATALYTIC ACTIVITY</scope>
    <scope>BIOPHYSICOCHEMICAL PROPERTIES</scope>
</reference>
<sequence>MAPSAQPLPVSVSDEKYANVKWEELAFKFVRTDYMYVAKCNHGESFQEGKILPFADLQLNPCAAVLQYGQGLYEGLKAYRTEDGRILLFRPDQNGLRLQAGADRLYMPYPSVDQFVSAIKQVALANKKWIPPPGKGTLYIRPILFGSGPILGSFPIPETTFTAFACPVGRYHKDNSGLNLKIEDQFRRAFPSGTGGVKSITNYCPVWIPLAEAKKQGFSDILFLDAATGKNIEELFAANVFMLKGNVVSTPTIAGTILPGVTRNCVMELCRDFGYQVEERTIPLVDFLDADEAFCTGTASIVTSIASVTFKDKKTGFKTGEETLAAKLYETLSDIQTGRVEDTKGWTVEIDRQG</sequence>
<proteinExistence type="evidence at protein level"/>